<sequence length="230" mass="26372">MSSVTTPAPVYTWTADEAIKFLKEWNFSLGIILLFITIILQFGYTSRSMFVYVIKMIILWLMWPLTIILTIFNCVYALNNVYLGFSIVFTIVAIIMWIVYFVNSIRLFIRTGSWWSFNPETNNLMCIDMKGRMYVRPIIEDYHTLTVTIIRGHLYMQGIKLGTGYSLSDLPAYVTVAKVSHLLTYKRGFLDKIGDTSGFAVYVKSKVGNYRLPSTQKGSGMDTALLRNNI</sequence>
<accession>P69705</accession>
<accession>P10526</accession>
<accession>P36359</accession>
<keyword id="KW-0325">Glycoprotein</keyword>
<keyword id="KW-1040">Host Golgi apparatus</keyword>
<keyword id="KW-1043">Host membrane</keyword>
<keyword id="KW-0945">Host-virus interaction</keyword>
<keyword id="KW-0472">Membrane</keyword>
<keyword id="KW-0812">Transmembrane</keyword>
<keyword id="KW-1133">Transmembrane helix</keyword>
<keyword id="KW-0261">Viral envelope protein</keyword>
<keyword id="KW-0899">Viral immunoevasion</keyword>
<keyword id="KW-0468">Viral matrix protein</keyword>
<keyword id="KW-0946">Virion</keyword>
<reference key="1">
    <citation type="journal article" date="2001" name="Adv. Exp. Med. Biol.">
        <title>Full-length genomic sequence of bovine coronavirus (31 kb). Completion of the open reading frame 1a/1b sequences.</title>
        <authorList>
            <person name="Yoo D."/>
            <person name="Pei Y."/>
        </authorList>
    </citation>
    <scope>NUCLEOTIDE SEQUENCE [GENOMIC RNA]</scope>
</reference>
<protein>
    <recommendedName>
        <fullName evidence="1">Membrane protein</fullName>
        <shortName evidence="1">M protein</shortName>
    </recommendedName>
    <alternativeName>
        <fullName evidence="1">E1 glycoprotein</fullName>
    </alternativeName>
    <alternativeName>
        <fullName evidence="1">Matrix glycoprotein</fullName>
    </alternativeName>
    <alternativeName>
        <fullName evidence="1">Membrane glycoprotein</fullName>
    </alternativeName>
</protein>
<name>VME1_CVBQ</name>
<organism>
    <name type="scientific">Bovine coronavirus (strain Quebec)</name>
    <name type="common">BCoV</name>
    <name type="synonym">BCV</name>
    <dbReference type="NCBI Taxonomy" id="11133"/>
    <lineage>
        <taxon>Viruses</taxon>
        <taxon>Riboviria</taxon>
        <taxon>Orthornavirae</taxon>
        <taxon>Pisuviricota</taxon>
        <taxon>Pisoniviricetes</taxon>
        <taxon>Nidovirales</taxon>
        <taxon>Cornidovirineae</taxon>
        <taxon>Coronaviridae</taxon>
        <taxon>Orthocoronavirinae</taxon>
        <taxon>Betacoronavirus</taxon>
        <taxon>Embecovirus</taxon>
        <taxon>Betacoronavirus 1</taxon>
    </lineage>
</organism>
<feature type="chain" id="PRO_0000106031" description="Membrane protein">
    <location>
        <begin position="1"/>
        <end position="230"/>
    </location>
</feature>
<feature type="topological domain" description="Virion surface" evidence="1">
    <location>
        <begin position="1"/>
        <end position="24"/>
    </location>
</feature>
<feature type="transmembrane region" description="Helical" evidence="1">
    <location>
        <begin position="25"/>
        <end position="45"/>
    </location>
</feature>
<feature type="topological domain" description="Intravirion" evidence="1">
    <location>
        <begin position="46"/>
        <end position="55"/>
    </location>
</feature>
<feature type="transmembrane region" description="Helical" evidence="1">
    <location>
        <begin position="56"/>
        <end position="76"/>
    </location>
</feature>
<feature type="topological domain" description="Virion surface" evidence="1">
    <location>
        <begin position="77"/>
        <end position="84"/>
    </location>
</feature>
<feature type="transmembrane region" description="Helical" evidence="1">
    <location>
        <begin position="85"/>
        <end position="105"/>
    </location>
</feature>
<feature type="topological domain" description="Intravirion" evidence="1">
    <location>
        <begin position="106"/>
        <end position="228"/>
    </location>
</feature>
<proteinExistence type="inferred from homology"/>
<evidence type="ECO:0000255" key="1">
    <source>
        <dbReference type="HAMAP-Rule" id="MF_04202"/>
    </source>
</evidence>
<evidence type="ECO:0000255" key="2">
    <source>
        <dbReference type="PROSITE-ProRule" id="PRU01275"/>
    </source>
</evidence>
<gene>
    <name evidence="1" type="primary">M</name>
    <name type="ORF">6</name>
</gene>
<dbReference type="EMBL" id="AF220295">
    <property type="protein sequence ID" value="AAL40405.1"/>
    <property type="molecule type" value="Genomic_RNA"/>
</dbReference>
<dbReference type="SMR" id="P69705"/>
<dbReference type="Proteomes" id="UP000008572">
    <property type="component" value="Genome"/>
</dbReference>
<dbReference type="GO" id="GO:0044178">
    <property type="term" value="C:host cell Golgi membrane"/>
    <property type="evidence" value="ECO:0007669"/>
    <property type="project" value="UniProtKB-SubCell"/>
</dbReference>
<dbReference type="GO" id="GO:0016020">
    <property type="term" value="C:membrane"/>
    <property type="evidence" value="ECO:0007669"/>
    <property type="project" value="UniProtKB-UniRule"/>
</dbReference>
<dbReference type="GO" id="GO:0019031">
    <property type="term" value="C:viral envelope"/>
    <property type="evidence" value="ECO:0007669"/>
    <property type="project" value="UniProtKB-UniRule"/>
</dbReference>
<dbReference type="GO" id="GO:0055036">
    <property type="term" value="C:virion membrane"/>
    <property type="evidence" value="ECO:0007669"/>
    <property type="project" value="UniProtKB-SubCell"/>
</dbReference>
<dbReference type="GO" id="GO:0039660">
    <property type="term" value="F:structural constituent of virion"/>
    <property type="evidence" value="ECO:0007669"/>
    <property type="project" value="UniProtKB-UniRule"/>
</dbReference>
<dbReference type="CDD" id="cd21568">
    <property type="entry name" value="HCoV-like_M"/>
    <property type="match status" value="1"/>
</dbReference>
<dbReference type="HAMAP" id="MF_04202">
    <property type="entry name" value="BETA_CORONA_M"/>
    <property type="match status" value="1"/>
</dbReference>
<dbReference type="InterPro" id="IPR002574">
    <property type="entry name" value="M_CoV"/>
</dbReference>
<dbReference type="InterPro" id="IPR044362">
    <property type="entry name" value="M_HCoV-like"/>
</dbReference>
<dbReference type="Pfam" id="PF01635">
    <property type="entry name" value="CoV_M"/>
    <property type="match status" value="1"/>
</dbReference>
<dbReference type="PROSITE" id="PS51927">
    <property type="entry name" value="COV_M"/>
    <property type="match status" value="1"/>
</dbReference>
<comment type="function">
    <text evidence="1 2">Component of the viral envelope that plays a central role in virus morphogenesis and assembly via its interactions with other viral proteins.</text>
</comment>
<comment type="subunit">
    <text evidence="1 2">Homomultimer. Interacts with envelope E protein in the budding compartment of the host cell, which is located between endoplasmic reticulum and the Golgi complex. Forms a complex with HE and S proteins. Interacts with nucleocapsid N protein. This interaction probably participates in RNA packaging into the virus.</text>
</comment>
<comment type="subcellular location">
    <subcellularLocation>
        <location evidence="1">Virion membrane</location>
        <topology evidence="1">Multi-pass membrane protein</topology>
    </subcellularLocation>
    <subcellularLocation>
        <location evidence="1">Host Golgi apparatus membrane</location>
        <topology evidence="1">Multi-pass membrane protein</topology>
    </subcellularLocation>
    <text evidence="1">Largely embedded in the lipid bilayer.</text>
</comment>
<comment type="similarity">
    <text evidence="1">Belongs to the betacoronaviruses M protein family.</text>
</comment>
<organismHost>
    <name type="scientific">Bos taurus</name>
    <name type="common">Bovine</name>
    <dbReference type="NCBI Taxonomy" id="9913"/>
</organismHost>